<comment type="function">
    <text evidence="2">Catalyzes the formation of pyridoxal 5'-phosphate from ribose 5-phosphate (RBP), glyceraldehyde 3-phosphate (G3P) and ammonia. The ammonia is provided by PDX2. Can also use ribulose 5-phosphate and dihydroxyacetone phosphate as substrates, resulting from enzyme-catalyzed isomerization of RBP and G3P, respectively. Also plays an indirect role in resistance to singlet oxygen-generating photosensitizers.</text>
</comment>
<comment type="catalytic activity">
    <reaction evidence="3">
        <text>aldehydo-D-ribose 5-phosphate + D-glyceraldehyde 3-phosphate + L-glutamine = pyridoxal 5'-phosphate + L-glutamate + phosphate + 3 H2O + H(+)</text>
        <dbReference type="Rhea" id="RHEA:31507"/>
        <dbReference type="ChEBI" id="CHEBI:15377"/>
        <dbReference type="ChEBI" id="CHEBI:15378"/>
        <dbReference type="ChEBI" id="CHEBI:29985"/>
        <dbReference type="ChEBI" id="CHEBI:43474"/>
        <dbReference type="ChEBI" id="CHEBI:58273"/>
        <dbReference type="ChEBI" id="CHEBI:58359"/>
        <dbReference type="ChEBI" id="CHEBI:59776"/>
        <dbReference type="ChEBI" id="CHEBI:597326"/>
        <dbReference type="EC" id="4.3.3.6"/>
    </reaction>
</comment>
<comment type="pathway">
    <text>Cofactor biosynthesis; pyridoxal 5'-phosphate biosynthesis.</text>
</comment>
<comment type="induction">
    <text evidence="4">By stress treatment with salicylic acid and ethephon.</text>
</comment>
<comment type="miscellaneous">
    <text>Vitamin B6 is an essential quencher of singlet oxygen in plants, that can protect cellular membranes from lipid peroxidation.</text>
</comment>
<comment type="similarity">
    <text evidence="5">Belongs to the PdxS/SNZ family.</text>
</comment>
<feature type="chain" id="PRO_0000109371" description="Probable pyridoxal 5'-phosphate synthase subunit PDX1">
    <location>
        <begin position="1"/>
        <end position="309"/>
    </location>
</feature>
<feature type="active site" description="Schiff-base intermediate with D-ribose 5-phosphate" evidence="1">
    <location>
        <position position="97"/>
    </location>
</feature>
<feature type="binding site" evidence="1">
    <location>
        <position position="40"/>
    </location>
    <ligand>
        <name>D-ribose 5-phosphate</name>
        <dbReference type="ChEBI" id="CHEBI:78346"/>
    </ligand>
</feature>
<feature type="binding site" evidence="1">
    <location>
        <position position="169"/>
    </location>
    <ligand>
        <name>D-ribose 5-phosphate</name>
        <dbReference type="ChEBI" id="CHEBI:78346"/>
    </ligand>
</feature>
<feature type="binding site" evidence="3">
    <location>
        <position position="181"/>
    </location>
    <ligand>
        <name>D-glyceraldehyde 3-phosphate</name>
        <dbReference type="ChEBI" id="CHEBI:59776"/>
    </ligand>
</feature>
<feature type="binding site" evidence="1">
    <location>
        <position position="230"/>
    </location>
    <ligand>
        <name>D-ribose 5-phosphate</name>
        <dbReference type="ChEBI" id="CHEBI:78346"/>
    </ligand>
</feature>
<feature type="binding site" evidence="1">
    <location>
        <begin position="251"/>
        <end position="252"/>
    </location>
    <ligand>
        <name>D-ribose 5-phosphate</name>
        <dbReference type="ChEBI" id="CHEBI:78346"/>
    </ligand>
</feature>
<reference key="1">
    <citation type="journal article" date="1995" name="Plant Mol. Biol.">
        <title>Characterisation of HEVER, a novel stress-induced gene from Hevea brasiliensis.</title>
        <authorList>
            <person name="Sivasubramaniam S."/>
            <person name="Vanniasingham V.M."/>
            <person name="Tan C.T."/>
            <person name="Chua N.H."/>
        </authorList>
    </citation>
    <scope>NUCLEOTIDE SEQUENCE [MRNA]</scope>
    <scope>INDUCTION</scope>
    <source>
        <tissue>Laticifer</tissue>
    </source>
</reference>
<keyword id="KW-0456">Lyase</keyword>
<keyword id="KW-0663">Pyridoxal phosphate</keyword>
<keyword id="KW-0704">Schiff base</keyword>
<keyword id="KW-0346">Stress response</keyword>
<gene>
    <name type="primary">PDX1</name>
    <name type="synonym">ER1</name>
</gene>
<sequence>MAGTGVVAVYGNGAITETKKSPFSVKVGLAQMLRGGVIMDVVNPEQARIAEEAGACAVMALERVPADIRAQGGVARMSDPQLIKEIKQSVTIPVMAKARIGHFVEAQILEAIGIDYVDESEVLTPADEENHINKHNFRIPFVCGCRNLGEALRRIREGAAMIRTKGEAGTGNVIEAVRHVRSVMGDIRLLRNMDDDEVFTFAKKIAAPYDLVMQTKQLGRLPVVQFAAGGVATPADAALMMQLGCDGVFVGSGVFKSGDPARRARAIVQAVTHYSDPDMLAEVSCGLGEAMVGINLNDKKVERFANRSE</sequence>
<organism>
    <name type="scientific">Hevea brasiliensis</name>
    <name type="common">Para rubber tree</name>
    <name type="synonym">Siphonia brasiliensis</name>
    <dbReference type="NCBI Taxonomy" id="3981"/>
    <lineage>
        <taxon>Eukaryota</taxon>
        <taxon>Viridiplantae</taxon>
        <taxon>Streptophyta</taxon>
        <taxon>Embryophyta</taxon>
        <taxon>Tracheophyta</taxon>
        <taxon>Spermatophyta</taxon>
        <taxon>Magnoliopsida</taxon>
        <taxon>eudicotyledons</taxon>
        <taxon>Gunneridae</taxon>
        <taxon>Pentapetalae</taxon>
        <taxon>rosids</taxon>
        <taxon>fabids</taxon>
        <taxon>Malpighiales</taxon>
        <taxon>Euphorbiaceae</taxon>
        <taxon>Crotonoideae</taxon>
        <taxon>Micrandreae</taxon>
        <taxon>Hevea</taxon>
    </lineage>
</organism>
<accession>Q39963</accession>
<evidence type="ECO:0000250" key="1">
    <source>
        <dbReference type="UniProtKB" id="O59080"/>
    </source>
</evidence>
<evidence type="ECO:0000250" key="2">
    <source>
        <dbReference type="UniProtKB" id="O80448"/>
    </source>
</evidence>
<evidence type="ECO:0000250" key="3">
    <source>
        <dbReference type="UniProtKB" id="Q03148"/>
    </source>
</evidence>
<evidence type="ECO:0000269" key="4">
    <source>
    </source>
</evidence>
<evidence type="ECO:0000305" key="5"/>
<protein>
    <recommendedName>
        <fullName>Probable pyridoxal 5'-phosphate synthase subunit PDX1</fullName>
        <shortName>PLP synthase subunit PDX1</shortName>
        <ecNumber>4.3.3.6</ecNumber>
    </recommendedName>
    <alternativeName>
        <fullName>Ethylene-inducible protein HEVER</fullName>
    </alternativeName>
</protein>
<proteinExistence type="evidence at transcript level"/>
<name>PDX1_HEVBR</name>
<dbReference type="EC" id="4.3.3.6"/>
<dbReference type="EMBL" id="M88254">
    <property type="protein sequence ID" value="AAA91063.1"/>
    <property type="molecule type" value="mRNA"/>
</dbReference>
<dbReference type="PIR" id="S60047">
    <property type="entry name" value="S60047"/>
</dbReference>
<dbReference type="PIR" id="S71492">
    <property type="entry name" value="S71492"/>
</dbReference>
<dbReference type="SMR" id="Q39963"/>
<dbReference type="OrthoDB" id="1660966at2759"/>
<dbReference type="UniPathway" id="UPA00245"/>
<dbReference type="GO" id="GO:0036381">
    <property type="term" value="F:pyridoxal 5'-phosphate synthase (glutamine hydrolysing) activity"/>
    <property type="evidence" value="ECO:0007669"/>
    <property type="project" value="UniProtKB-EC"/>
</dbReference>
<dbReference type="GO" id="GO:0006520">
    <property type="term" value="P:amino acid metabolic process"/>
    <property type="evidence" value="ECO:0007669"/>
    <property type="project" value="TreeGrafter"/>
</dbReference>
<dbReference type="GO" id="GO:0042823">
    <property type="term" value="P:pyridoxal phosphate biosynthetic process"/>
    <property type="evidence" value="ECO:0007669"/>
    <property type="project" value="UniProtKB-UniPathway"/>
</dbReference>
<dbReference type="GO" id="GO:0008615">
    <property type="term" value="P:pyridoxine biosynthetic process"/>
    <property type="evidence" value="ECO:0007669"/>
    <property type="project" value="TreeGrafter"/>
</dbReference>
<dbReference type="CDD" id="cd04727">
    <property type="entry name" value="pdxS"/>
    <property type="match status" value="1"/>
</dbReference>
<dbReference type="FunFam" id="3.20.20.70:FF:000001">
    <property type="entry name" value="Pyridoxine biosynthesis protein PDX1"/>
    <property type="match status" value="1"/>
</dbReference>
<dbReference type="Gene3D" id="3.20.20.70">
    <property type="entry name" value="Aldolase class I"/>
    <property type="match status" value="1"/>
</dbReference>
<dbReference type="HAMAP" id="MF_01824">
    <property type="entry name" value="PdxS"/>
    <property type="match status" value="1"/>
</dbReference>
<dbReference type="InterPro" id="IPR013785">
    <property type="entry name" value="Aldolase_TIM"/>
</dbReference>
<dbReference type="InterPro" id="IPR001852">
    <property type="entry name" value="PdxS/SNZ"/>
</dbReference>
<dbReference type="InterPro" id="IPR033755">
    <property type="entry name" value="PdxS/SNZ_N"/>
</dbReference>
<dbReference type="InterPro" id="IPR011060">
    <property type="entry name" value="RibuloseP-bd_barrel"/>
</dbReference>
<dbReference type="NCBIfam" id="NF003215">
    <property type="entry name" value="PRK04180.1"/>
    <property type="match status" value="1"/>
</dbReference>
<dbReference type="NCBIfam" id="TIGR00343">
    <property type="entry name" value="pyridoxal 5'-phosphate synthase lyase subunit PdxS"/>
    <property type="match status" value="1"/>
</dbReference>
<dbReference type="PANTHER" id="PTHR31829:SF6">
    <property type="entry name" value="PDXS_SNZ N-TERMINAL DOMAIN-CONTAINING PROTEIN"/>
    <property type="match status" value="1"/>
</dbReference>
<dbReference type="PANTHER" id="PTHR31829">
    <property type="entry name" value="PYRIDOXAL 5'-PHOSPHATE SYNTHASE SUBUNIT SNZ1-RELATED"/>
    <property type="match status" value="1"/>
</dbReference>
<dbReference type="Pfam" id="PF01680">
    <property type="entry name" value="SOR_SNZ"/>
    <property type="match status" value="1"/>
</dbReference>
<dbReference type="PIRSF" id="PIRSF029271">
    <property type="entry name" value="Pdx1"/>
    <property type="match status" value="1"/>
</dbReference>
<dbReference type="SUPFAM" id="SSF51366">
    <property type="entry name" value="Ribulose-phoshate binding barrel"/>
    <property type="match status" value="1"/>
</dbReference>
<dbReference type="PROSITE" id="PS01235">
    <property type="entry name" value="PDXS_SNZ_1"/>
    <property type="match status" value="1"/>
</dbReference>
<dbReference type="PROSITE" id="PS51129">
    <property type="entry name" value="PDXS_SNZ_2"/>
    <property type="match status" value="1"/>
</dbReference>